<reference key="1">
    <citation type="journal article" date="2001" name="Nature">
        <title>Genome sequence of enterohaemorrhagic Escherichia coli O157:H7.</title>
        <authorList>
            <person name="Perna N.T."/>
            <person name="Plunkett G. III"/>
            <person name="Burland V."/>
            <person name="Mau B."/>
            <person name="Glasner J.D."/>
            <person name="Rose D.J."/>
            <person name="Mayhew G.F."/>
            <person name="Evans P.S."/>
            <person name="Gregor J."/>
            <person name="Kirkpatrick H.A."/>
            <person name="Posfai G."/>
            <person name="Hackett J."/>
            <person name="Klink S."/>
            <person name="Boutin A."/>
            <person name="Shao Y."/>
            <person name="Miller L."/>
            <person name="Grotbeck E.J."/>
            <person name="Davis N.W."/>
            <person name="Lim A."/>
            <person name="Dimalanta E.T."/>
            <person name="Potamousis K."/>
            <person name="Apodaca J."/>
            <person name="Anantharaman T.S."/>
            <person name="Lin J."/>
            <person name="Yen G."/>
            <person name="Schwartz D.C."/>
            <person name="Welch R.A."/>
            <person name="Blattner F.R."/>
        </authorList>
    </citation>
    <scope>NUCLEOTIDE SEQUENCE [LARGE SCALE GENOMIC DNA]</scope>
    <source>
        <strain>O157:H7 / EDL933 / ATCC 700927 / EHEC</strain>
    </source>
</reference>
<reference key="2">
    <citation type="journal article" date="2001" name="DNA Res.">
        <title>Complete genome sequence of enterohemorrhagic Escherichia coli O157:H7 and genomic comparison with a laboratory strain K-12.</title>
        <authorList>
            <person name="Hayashi T."/>
            <person name="Makino K."/>
            <person name="Ohnishi M."/>
            <person name="Kurokawa K."/>
            <person name="Ishii K."/>
            <person name="Yokoyama K."/>
            <person name="Han C.-G."/>
            <person name="Ohtsubo E."/>
            <person name="Nakayama K."/>
            <person name="Murata T."/>
            <person name="Tanaka M."/>
            <person name="Tobe T."/>
            <person name="Iida T."/>
            <person name="Takami H."/>
            <person name="Honda T."/>
            <person name="Sasakawa C."/>
            <person name="Ogasawara N."/>
            <person name="Yasunaga T."/>
            <person name="Kuhara S."/>
            <person name="Shiba T."/>
            <person name="Hattori M."/>
            <person name="Shinagawa H."/>
        </authorList>
    </citation>
    <scope>NUCLEOTIDE SEQUENCE [LARGE SCALE GENOMIC DNA]</scope>
    <source>
        <strain>O157:H7 / Sakai / RIMD 0509952 / EHEC</strain>
    </source>
</reference>
<accession>P0ACZ6</accession>
<accession>P30854</accession>
<name>EVGA_ECO57</name>
<protein>
    <recommendedName>
        <fullName evidence="4">DNA-binding transcriptional activator EvgA</fullName>
    </recommendedName>
</protein>
<dbReference type="EMBL" id="AE005174">
    <property type="protein sequence ID" value="AAG57494.1"/>
    <property type="molecule type" value="Genomic_DNA"/>
</dbReference>
<dbReference type="EMBL" id="BA000007">
    <property type="protein sequence ID" value="BAB36671.1"/>
    <property type="molecule type" value="Genomic_DNA"/>
</dbReference>
<dbReference type="PIR" id="H91034">
    <property type="entry name" value="H91034"/>
</dbReference>
<dbReference type="RefSeq" id="NP_311275.1">
    <property type="nucleotide sequence ID" value="NC_002695.1"/>
</dbReference>
<dbReference type="RefSeq" id="WP_000991370.1">
    <property type="nucleotide sequence ID" value="NZ_VOAI01000001.1"/>
</dbReference>
<dbReference type="SMR" id="P0ACZ6"/>
<dbReference type="STRING" id="155864.Z3631"/>
<dbReference type="GeneID" id="75202562"/>
<dbReference type="GeneID" id="915651"/>
<dbReference type="KEGG" id="ece:Z3631"/>
<dbReference type="KEGG" id="ecs:ECs_3248"/>
<dbReference type="PATRIC" id="fig|386585.9.peg.3392"/>
<dbReference type="eggNOG" id="COG2197">
    <property type="taxonomic scope" value="Bacteria"/>
</dbReference>
<dbReference type="HOGENOM" id="CLU_000445_90_1_6"/>
<dbReference type="OMA" id="QDYVIPA"/>
<dbReference type="Proteomes" id="UP000000558">
    <property type="component" value="Chromosome"/>
</dbReference>
<dbReference type="Proteomes" id="UP000002519">
    <property type="component" value="Chromosome"/>
</dbReference>
<dbReference type="GO" id="GO:0005737">
    <property type="term" value="C:cytoplasm"/>
    <property type="evidence" value="ECO:0007669"/>
    <property type="project" value="UniProtKB-SubCell"/>
</dbReference>
<dbReference type="GO" id="GO:0003677">
    <property type="term" value="F:DNA binding"/>
    <property type="evidence" value="ECO:0007669"/>
    <property type="project" value="UniProtKB-KW"/>
</dbReference>
<dbReference type="GO" id="GO:0000160">
    <property type="term" value="P:phosphorelay signal transduction system"/>
    <property type="evidence" value="ECO:0007669"/>
    <property type="project" value="UniProtKB-KW"/>
</dbReference>
<dbReference type="GO" id="GO:0006355">
    <property type="term" value="P:regulation of DNA-templated transcription"/>
    <property type="evidence" value="ECO:0007669"/>
    <property type="project" value="InterPro"/>
</dbReference>
<dbReference type="CDD" id="cd06170">
    <property type="entry name" value="LuxR_C_like"/>
    <property type="match status" value="1"/>
</dbReference>
<dbReference type="CDD" id="cd17535">
    <property type="entry name" value="REC_NarL-like"/>
    <property type="match status" value="1"/>
</dbReference>
<dbReference type="Gene3D" id="3.40.50.2300">
    <property type="match status" value="1"/>
</dbReference>
<dbReference type="Gene3D" id="1.10.10.10">
    <property type="entry name" value="Winged helix-like DNA-binding domain superfamily/Winged helix DNA-binding domain"/>
    <property type="match status" value="1"/>
</dbReference>
<dbReference type="InterPro" id="IPR011006">
    <property type="entry name" value="CheY-like_superfamily"/>
</dbReference>
<dbReference type="InterPro" id="IPR051015">
    <property type="entry name" value="RcsB_transcriptional_reg"/>
</dbReference>
<dbReference type="InterPro" id="IPR016032">
    <property type="entry name" value="Sig_transdc_resp-reg_C-effctor"/>
</dbReference>
<dbReference type="InterPro" id="IPR001789">
    <property type="entry name" value="Sig_transdc_resp-reg_receiver"/>
</dbReference>
<dbReference type="InterPro" id="IPR000792">
    <property type="entry name" value="Tscrpt_reg_LuxR_C"/>
</dbReference>
<dbReference type="InterPro" id="IPR036388">
    <property type="entry name" value="WH-like_DNA-bd_sf"/>
</dbReference>
<dbReference type="NCBIfam" id="NF007419">
    <property type="entry name" value="PRK09958.1"/>
    <property type="match status" value="1"/>
</dbReference>
<dbReference type="PANTHER" id="PTHR45566">
    <property type="entry name" value="HTH-TYPE TRANSCRIPTIONAL REGULATOR YHJB-RELATED"/>
    <property type="match status" value="1"/>
</dbReference>
<dbReference type="PANTHER" id="PTHR45566:SF2">
    <property type="entry name" value="NARL SUBFAMILY"/>
    <property type="match status" value="1"/>
</dbReference>
<dbReference type="Pfam" id="PF00196">
    <property type="entry name" value="GerE"/>
    <property type="match status" value="1"/>
</dbReference>
<dbReference type="Pfam" id="PF00072">
    <property type="entry name" value="Response_reg"/>
    <property type="match status" value="1"/>
</dbReference>
<dbReference type="PRINTS" id="PR00038">
    <property type="entry name" value="HTHLUXR"/>
</dbReference>
<dbReference type="SMART" id="SM00421">
    <property type="entry name" value="HTH_LUXR"/>
    <property type="match status" value="1"/>
</dbReference>
<dbReference type="SMART" id="SM00448">
    <property type="entry name" value="REC"/>
    <property type="match status" value="1"/>
</dbReference>
<dbReference type="SUPFAM" id="SSF46894">
    <property type="entry name" value="C-terminal effector domain of the bipartite response regulators"/>
    <property type="match status" value="1"/>
</dbReference>
<dbReference type="SUPFAM" id="SSF52172">
    <property type="entry name" value="CheY-like"/>
    <property type="match status" value="1"/>
</dbReference>
<dbReference type="PROSITE" id="PS00622">
    <property type="entry name" value="HTH_LUXR_1"/>
    <property type="match status" value="1"/>
</dbReference>
<dbReference type="PROSITE" id="PS50043">
    <property type="entry name" value="HTH_LUXR_2"/>
    <property type="match status" value="1"/>
</dbReference>
<dbReference type="PROSITE" id="PS50110">
    <property type="entry name" value="RESPONSE_REGULATORY"/>
    <property type="match status" value="1"/>
</dbReference>
<keyword id="KW-0010">Activator</keyword>
<keyword id="KW-0963">Cytoplasm</keyword>
<keyword id="KW-0238">DNA-binding</keyword>
<keyword id="KW-0597">Phosphoprotein</keyword>
<keyword id="KW-1185">Reference proteome</keyword>
<keyword id="KW-0804">Transcription</keyword>
<keyword id="KW-0805">Transcription regulation</keyword>
<keyword id="KW-0902">Two-component regulatory system</keyword>
<organism>
    <name type="scientific">Escherichia coli O157:H7</name>
    <dbReference type="NCBI Taxonomy" id="83334"/>
    <lineage>
        <taxon>Bacteria</taxon>
        <taxon>Pseudomonadati</taxon>
        <taxon>Pseudomonadota</taxon>
        <taxon>Gammaproteobacteria</taxon>
        <taxon>Enterobacterales</taxon>
        <taxon>Enterobacteriaceae</taxon>
        <taxon>Escherichia</taxon>
    </lineage>
</organism>
<sequence length="204" mass="22690">MNAIIIDDHPLAIAAIRNLLIKNDIEILAELTEGGSAVQRVETLKPDIVIIDVDIPGVNGIQVLETLRKRQYSGIIIIVSAKNDHFYGKHCADAGANGFVSKKEGMNNIIAAIEAAKNGYCYFPFSLNRFVGSLTSDQQKLDSLSKQEISVMRYILDGKDNNDIAEKMFISNKTVSTYKSRLMEKLECKSLMDLYTFAQRNKIG</sequence>
<comment type="function">
    <text evidence="1">Member of the two-component regulatory system EvgS/EvgA. Regulates the expression of emrKY operon and yfdX. Also seems to control expression of at least one other multidrug efflux operon (By similarity).</text>
</comment>
<comment type="subunit">
    <text evidence="1">Homodimer.</text>
</comment>
<comment type="subcellular location">
    <subcellularLocation>
        <location evidence="1">Cytoplasm</location>
    </subcellularLocation>
</comment>
<comment type="PTM">
    <text evidence="1">Phosphorylated by EvgS.</text>
</comment>
<proteinExistence type="inferred from homology"/>
<feature type="chain" id="PRO_0000081036" description="DNA-binding transcriptional activator EvgA">
    <location>
        <begin position="1"/>
        <end position="204"/>
    </location>
</feature>
<feature type="domain" description="Response regulatory" evidence="2">
    <location>
        <begin position="2"/>
        <end position="117"/>
    </location>
</feature>
<feature type="domain" description="HTH luxR-type" evidence="3">
    <location>
        <begin position="137"/>
        <end position="202"/>
    </location>
</feature>
<feature type="DNA-binding region" description="H-T-H motif" evidence="3">
    <location>
        <begin position="161"/>
        <end position="180"/>
    </location>
</feature>
<feature type="modified residue" description="4-aspartylphosphate" evidence="2">
    <location>
        <position position="52"/>
    </location>
</feature>
<evidence type="ECO:0000250" key="1"/>
<evidence type="ECO:0000255" key="2">
    <source>
        <dbReference type="PROSITE-ProRule" id="PRU00169"/>
    </source>
</evidence>
<evidence type="ECO:0000255" key="3">
    <source>
        <dbReference type="PROSITE-ProRule" id="PRU00411"/>
    </source>
</evidence>
<evidence type="ECO:0000305" key="4"/>
<gene>
    <name type="primary">evgA</name>
    <name type="ordered locus">Z3631</name>
    <name type="ordered locus">ECs3248</name>
</gene>